<reference key="1">
    <citation type="journal article" date="2009" name="PLoS Genet.">
        <title>Organised genome dynamics in the Escherichia coli species results in highly diverse adaptive paths.</title>
        <authorList>
            <person name="Touchon M."/>
            <person name="Hoede C."/>
            <person name="Tenaillon O."/>
            <person name="Barbe V."/>
            <person name="Baeriswyl S."/>
            <person name="Bidet P."/>
            <person name="Bingen E."/>
            <person name="Bonacorsi S."/>
            <person name="Bouchier C."/>
            <person name="Bouvet O."/>
            <person name="Calteau A."/>
            <person name="Chiapello H."/>
            <person name="Clermont O."/>
            <person name="Cruveiller S."/>
            <person name="Danchin A."/>
            <person name="Diard M."/>
            <person name="Dossat C."/>
            <person name="Karoui M.E."/>
            <person name="Frapy E."/>
            <person name="Garry L."/>
            <person name="Ghigo J.M."/>
            <person name="Gilles A.M."/>
            <person name="Johnson J."/>
            <person name="Le Bouguenec C."/>
            <person name="Lescat M."/>
            <person name="Mangenot S."/>
            <person name="Martinez-Jehanne V."/>
            <person name="Matic I."/>
            <person name="Nassif X."/>
            <person name="Oztas S."/>
            <person name="Petit M.A."/>
            <person name="Pichon C."/>
            <person name="Rouy Z."/>
            <person name="Ruf C.S."/>
            <person name="Schneider D."/>
            <person name="Tourret J."/>
            <person name="Vacherie B."/>
            <person name="Vallenet D."/>
            <person name="Medigue C."/>
            <person name="Rocha E.P.C."/>
            <person name="Denamur E."/>
        </authorList>
    </citation>
    <scope>NUCLEOTIDE SEQUENCE [LARGE SCALE GENOMIC DNA]</scope>
    <source>
        <strain>IAI1</strain>
    </source>
</reference>
<name>ULAE_ECO8A</name>
<comment type="function">
    <text evidence="1">Catalyzes the isomerization of L-xylulose-5-phosphate to L-ribulose-5-phosphate. Is involved in the anaerobic L-ascorbate utilization.</text>
</comment>
<comment type="catalytic activity">
    <reaction evidence="1">
        <text>L-ribulose 5-phosphate = L-xylulose 5-phosphate</text>
        <dbReference type="Rhea" id="RHEA:18497"/>
        <dbReference type="ChEBI" id="CHEBI:57829"/>
        <dbReference type="ChEBI" id="CHEBI:58226"/>
        <dbReference type="EC" id="5.1.3.22"/>
    </reaction>
</comment>
<comment type="pathway">
    <text evidence="1">Cofactor degradation; L-ascorbate degradation; D-xylulose 5-phosphate from L-ascorbate: step 3/4.</text>
</comment>
<comment type="induction">
    <text evidence="1">Induced by L-ascorbate. Repressed by UlaR.</text>
</comment>
<comment type="similarity">
    <text evidence="1">Belongs to the L-ribulose-5-phosphate 3-epimerase family.</text>
</comment>
<protein>
    <recommendedName>
        <fullName evidence="1">L-ribulose-5-phosphate 3-epimerase UlaE</fullName>
        <ecNumber evidence="1">5.1.3.22</ecNumber>
    </recommendedName>
    <alternativeName>
        <fullName evidence="1">L-ascorbate utilization protein E</fullName>
    </alternativeName>
    <alternativeName>
        <fullName evidence="1">L-xylulose-5-phosphate 3-epimerase</fullName>
    </alternativeName>
</protein>
<gene>
    <name evidence="1" type="primary">ulaE</name>
    <name type="ordered locus">ECIAI1_4430</name>
</gene>
<accession>B7M9F9</accession>
<sequence length="284" mass="32065">MLSKQIPLGIYEKALPAGECWLERLQLAKMLGFDFVEMSVDETDDRLSRLDWSREQRLALVNAIVETGVRVPSMCLSAHRRFPLGSEDDAVRAQGLEIMRKAIQFAQDVGIRVIQLAGYDVYYQEANNETRRRFRDGLKESVEMASRAQVTLAMEIMDYPLMNSISKALGYAHYLNNPWFQLYPDIGNLSAWDNDVQMELQAGIGHIVAVHVKDTKPGVFKNVPFGEGVVDFERCFETLKQSGYCGPYLIEMWSETAEDPAAEVAKARDWVKARMAKAGMVEAA</sequence>
<keyword id="KW-0413">Isomerase</keyword>
<proteinExistence type="inferred from homology"/>
<evidence type="ECO:0000255" key="1">
    <source>
        <dbReference type="HAMAP-Rule" id="MF_01951"/>
    </source>
</evidence>
<organism>
    <name type="scientific">Escherichia coli O8 (strain IAI1)</name>
    <dbReference type="NCBI Taxonomy" id="585034"/>
    <lineage>
        <taxon>Bacteria</taxon>
        <taxon>Pseudomonadati</taxon>
        <taxon>Pseudomonadota</taxon>
        <taxon>Gammaproteobacteria</taxon>
        <taxon>Enterobacterales</taxon>
        <taxon>Enterobacteriaceae</taxon>
        <taxon>Escherichia</taxon>
    </lineage>
</organism>
<dbReference type="EC" id="5.1.3.22" evidence="1"/>
<dbReference type="EMBL" id="CU928160">
    <property type="protein sequence ID" value="CAR01172.1"/>
    <property type="molecule type" value="Genomic_DNA"/>
</dbReference>
<dbReference type="RefSeq" id="WP_000949489.1">
    <property type="nucleotide sequence ID" value="NC_011741.1"/>
</dbReference>
<dbReference type="SMR" id="B7M9F9"/>
<dbReference type="KEGG" id="ecr:ECIAI1_4430"/>
<dbReference type="HOGENOM" id="CLU_082738_0_0_6"/>
<dbReference type="UniPathway" id="UPA00263">
    <property type="reaction ID" value="UER00379"/>
</dbReference>
<dbReference type="GO" id="GO:0016861">
    <property type="term" value="F:intramolecular oxidoreductase activity, interconverting aldoses and ketoses"/>
    <property type="evidence" value="ECO:0007669"/>
    <property type="project" value="InterPro"/>
</dbReference>
<dbReference type="GO" id="GO:0034015">
    <property type="term" value="F:L-ribulose-5-phosphate 3-epimerase activity"/>
    <property type="evidence" value="ECO:0007669"/>
    <property type="project" value="UniProtKB-UniRule"/>
</dbReference>
<dbReference type="GO" id="GO:0019854">
    <property type="term" value="P:L-ascorbic acid catabolic process"/>
    <property type="evidence" value="ECO:0007669"/>
    <property type="project" value="UniProtKB-UniRule"/>
</dbReference>
<dbReference type="FunFam" id="3.20.20.150:FF:000003">
    <property type="entry name" value="L-ribulose-5-phosphate 3-epimerase UlaE"/>
    <property type="match status" value="1"/>
</dbReference>
<dbReference type="Gene3D" id="3.20.20.150">
    <property type="entry name" value="Divalent-metal-dependent TIM barrel enzymes"/>
    <property type="match status" value="1"/>
</dbReference>
<dbReference type="HAMAP" id="MF_01951">
    <property type="entry name" value="UlaE"/>
    <property type="match status" value="1"/>
</dbReference>
<dbReference type="InterPro" id="IPR004560">
    <property type="entry name" value="L-Ru-5P_3-Epase"/>
</dbReference>
<dbReference type="InterPro" id="IPR023492">
    <property type="entry name" value="L-Ru-5P_3-Epase_Enterobacteria"/>
</dbReference>
<dbReference type="InterPro" id="IPR050417">
    <property type="entry name" value="Sugar_Epim/Isomerase"/>
</dbReference>
<dbReference type="InterPro" id="IPR036237">
    <property type="entry name" value="Xyl_isomerase-like_sf"/>
</dbReference>
<dbReference type="InterPro" id="IPR013022">
    <property type="entry name" value="Xyl_isomerase-like_TIM-brl"/>
</dbReference>
<dbReference type="NCBIfam" id="TIGR00542">
    <property type="entry name" value="hxl6Piso_put"/>
    <property type="match status" value="1"/>
</dbReference>
<dbReference type="NCBIfam" id="NF009688">
    <property type="entry name" value="PRK13209.1"/>
    <property type="match status" value="1"/>
</dbReference>
<dbReference type="NCBIfam" id="NF009689">
    <property type="entry name" value="PRK13210.1"/>
    <property type="match status" value="1"/>
</dbReference>
<dbReference type="PANTHER" id="PTHR43489">
    <property type="entry name" value="ISOMERASE"/>
    <property type="match status" value="1"/>
</dbReference>
<dbReference type="PANTHER" id="PTHR43489:SF8">
    <property type="entry name" value="L-RIBULOSE-5-PHOSPHATE 3-EPIMERASE ULAE"/>
    <property type="match status" value="1"/>
</dbReference>
<dbReference type="Pfam" id="PF01261">
    <property type="entry name" value="AP_endonuc_2"/>
    <property type="match status" value="1"/>
</dbReference>
<dbReference type="SUPFAM" id="SSF51658">
    <property type="entry name" value="Xylose isomerase-like"/>
    <property type="match status" value="1"/>
</dbReference>
<feature type="chain" id="PRO_1000188825" description="L-ribulose-5-phosphate 3-epimerase UlaE">
    <location>
        <begin position="1"/>
        <end position="284"/>
    </location>
</feature>